<comment type="function">
    <text evidence="1">Involved in peptide bond synthesis. Stimulates efficient translation and peptide-bond synthesis on native or reconstituted 70S ribosomes in vitro. Probably functions indirectly by altering the affinity of the ribosome for aminoacyl-tRNA, thus increasing their reactivity as acceptors for peptidyl transferase.</text>
</comment>
<comment type="pathway">
    <text evidence="1">Protein biosynthesis; polypeptide chain elongation.</text>
</comment>
<comment type="subcellular location">
    <subcellularLocation>
        <location evidence="1">Cytoplasm</location>
    </subcellularLocation>
</comment>
<comment type="similarity">
    <text evidence="1">Belongs to the elongation factor P family.</text>
</comment>
<reference key="1">
    <citation type="journal article" date="2005" name="J. Bacteriol.">
        <title>Completion of the genome sequence of Brucella abortus and comparison to the highly similar genomes of Brucella melitensis and Brucella suis.</title>
        <authorList>
            <person name="Halling S.M."/>
            <person name="Peterson-Burch B.D."/>
            <person name="Bricker B.J."/>
            <person name="Zuerner R.L."/>
            <person name="Qing Z."/>
            <person name="Li L.-L."/>
            <person name="Kapur V."/>
            <person name="Alt D.P."/>
            <person name="Olsen S.C."/>
        </authorList>
    </citation>
    <scope>NUCLEOTIDE SEQUENCE [LARGE SCALE GENOMIC DNA]</scope>
    <source>
        <strain>9-941</strain>
    </source>
</reference>
<accession>P0C103</accession>
<accession>Q57BH0</accession>
<accession>Q6XUV8</accession>
<dbReference type="EMBL" id="AE017223">
    <property type="protein sequence ID" value="AAX75014.1"/>
    <property type="molecule type" value="Genomic_DNA"/>
</dbReference>
<dbReference type="RefSeq" id="WP_002964799.1">
    <property type="nucleotide sequence ID" value="NC_006932.1"/>
</dbReference>
<dbReference type="SMR" id="P0C103"/>
<dbReference type="EnsemblBacteria" id="AAX75014">
    <property type="protein sequence ID" value="AAX75014"/>
    <property type="gene ID" value="BruAb1_1695"/>
</dbReference>
<dbReference type="GeneID" id="93017928"/>
<dbReference type="KEGG" id="bmb:BruAb1_1695"/>
<dbReference type="HOGENOM" id="CLU_074944_1_1_5"/>
<dbReference type="UniPathway" id="UPA00345"/>
<dbReference type="Proteomes" id="UP000000540">
    <property type="component" value="Chromosome I"/>
</dbReference>
<dbReference type="GO" id="GO:0005737">
    <property type="term" value="C:cytoplasm"/>
    <property type="evidence" value="ECO:0007669"/>
    <property type="project" value="UniProtKB-SubCell"/>
</dbReference>
<dbReference type="GO" id="GO:0003746">
    <property type="term" value="F:translation elongation factor activity"/>
    <property type="evidence" value="ECO:0007669"/>
    <property type="project" value="UniProtKB-UniRule"/>
</dbReference>
<dbReference type="GO" id="GO:0043043">
    <property type="term" value="P:peptide biosynthetic process"/>
    <property type="evidence" value="ECO:0007669"/>
    <property type="project" value="InterPro"/>
</dbReference>
<dbReference type="CDD" id="cd04470">
    <property type="entry name" value="S1_EF-P_repeat_1"/>
    <property type="match status" value="1"/>
</dbReference>
<dbReference type="CDD" id="cd05794">
    <property type="entry name" value="S1_EF-P_repeat_2"/>
    <property type="match status" value="1"/>
</dbReference>
<dbReference type="FunFam" id="2.30.30.30:FF:000003">
    <property type="entry name" value="Elongation factor P"/>
    <property type="match status" value="1"/>
</dbReference>
<dbReference type="FunFam" id="2.40.50.140:FF:000004">
    <property type="entry name" value="Elongation factor P"/>
    <property type="match status" value="1"/>
</dbReference>
<dbReference type="FunFam" id="2.40.50.140:FF:000009">
    <property type="entry name" value="Elongation factor P"/>
    <property type="match status" value="1"/>
</dbReference>
<dbReference type="Gene3D" id="2.30.30.30">
    <property type="match status" value="1"/>
</dbReference>
<dbReference type="Gene3D" id="2.40.50.140">
    <property type="entry name" value="Nucleic acid-binding proteins"/>
    <property type="match status" value="2"/>
</dbReference>
<dbReference type="HAMAP" id="MF_00141">
    <property type="entry name" value="EF_P"/>
    <property type="match status" value="1"/>
</dbReference>
<dbReference type="InterPro" id="IPR015365">
    <property type="entry name" value="Elong-fact-P_C"/>
</dbReference>
<dbReference type="InterPro" id="IPR012340">
    <property type="entry name" value="NA-bd_OB-fold"/>
</dbReference>
<dbReference type="InterPro" id="IPR014722">
    <property type="entry name" value="Rib_uL2_dom2"/>
</dbReference>
<dbReference type="InterPro" id="IPR020599">
    <property type="entry name" value="Transl_elong_fac_P/YeiP"/>
</dbReference>
<dbReference type="InterPro" id="IPR013185">
    <property type="entry name" value="Transl_elong_KOW-like"/>
</dbReference>
<dbReference type="InterPro" id="IPR001059">
    <property type="entry name" value="Transl_elong_P/YeiP_cen"/>
</dbReference>
<dbReference type="InterPro" id="IPR013852">
    <property type="entry name" value="Transl_elong_P/YeiP_CS"/>
</dbReference>
<dbReference type="InterPro" id="IPR011768">
    <property type="entry name" value="Transl_elongation_fac_P"/>
</dbReference>
<dbReference type="InterPro" id="IPR008991">
    <property type="entry name" value="Translation_prot_SH3-like_sf"/>
</dbReference>
<dbReference type="NCBIfam" id="TIGR00038">
    <property type="entry name" value="efp"/>
    <property type="match status" value="1"/>
</dbReference>
<dbReference type="NCBIfam" id="NF001810">
    <property type="entry name" value="PRK00529.1"/>
    <property type="match status" value="1"/>
</dbReference>
<dbReference type="PANTHER" id="PTHR30053">
    <property type="entry name" value="ELONGATION FACTOR P"/>
    <property type="match status" value="1"/>
</dbReference>
<dbReference type="PANTHER" id="PTHR30053:SF14">
    <property type="entry name" value="TRANSLATION ELONGATION FACTOR KOW-LIKE DOMAIN-CONTAINING PROTEIN"/>
    <property type="match status" value="1"/>
</dbReference>
<dbReference type="Pfam" id="PF01132">
    <property type="entry name" value="EFP"/>
    <property type="match status" value="1"/>
</dbReference>
<dbReference type="Pfam" id="PF08207">
    <property type="entry name" value="EFP_N"/>
    <property type="match status" value="1"/>
</dbReference>
<dbReference type="Pfam" id="PF09285">
    <property type="entry name" value="Elong-fact-P_C"/>
    <property type="match status" value="1"/>
</dbReference>
<dbReference type="PIRSF" id="PIRSF005901">
    <property type="entry name" value="EF-P"/>
    <property type="match status" value="1"/>
</dbReference>
<dbReference type="SMART" id="SM01185">
    <property type="entry name" value="EFP"/>
    <property type="match status" value="1"/>
</dbReference>
<dbReference type="SMART" id="SM00841">
    <property type="entry name" value="Elong-fact-P_C"/>
    <property type="match status" value="1"/>
</dbReference>
<dbReference type="SUPFAM" id="SSF50249">
    <property type="entry name" value="Nucleic acid-binding proteins"/>
    <property type="match status" value="2"/>
</dbReference>
<dbReference type="SUPFAM" id="SSF50104">
    <property type="entry name" value="Translation proteins SH3-like domain"/>
    <property type="match status" value="1"/>
</dbReference>
<dbReference type="PROSITE" id="PS01275">
    <property type="entry name" value="EFP"/>
    <property type="match status" value="1"/>
</dbReference>
<protein>
    <recommendedName>
        <fullName evidence="1">Elongation factor P</fullName>
        <shortName evidence="1">EF-P</shortName>
    </recommendedName>
</protein>
<sequence>MKINGNEIRPGNVIEHEGGLWVAVKTNAVKPGKGGAYNQVELKNLINGTKLNERFRAAESVERVRLEQKDFSFLYEQGEALIFMDTETYEQLELQKDFVGDRAAFLQDGMMVTVELYEEKPIGIRLPDQVTLAITEADPVVKGQTAASSYKPAVLENGIRIPVPPFIASGERVIVDTNELTYISRA</sequence>
<feature type="chain" id="PRO_0000094211" description="Elongation factor P">
    <location>
        <begin position="1"/>
        <end position="186"/>
    </location>
</feature>
<evidence type="ECO:0000255" key="1">
    <source>
        <dbReference type="HAMAP-Rule" id="MF_00141"/>
    </source>
</evidence>
<proteinExistence type="inferred from homology"/>
<name>EFP_BRUAB</name>
<organism>
    <name type="scientific">Brucella abortus biovar 1 (strain 9-941)</name>
    <dbReference type="NCBI Taxonomy" id="262698"/>
    <lineage>
        <taxon>Bacteria</taxon>
        <taxon>Pseudomonadati</taxon>
        <taxon>Pseudomonadota</taxon>
        <taxon>Alphaproteobacteria</taxon>
        <taxon>Hyphomicrobiales</taxon>
        <taxon>Brucellaceae</taxon>
        <taxon>Brucella/Ochrobactrum group</taxon>
        <taxon>Brucella</taxon>
    </lineage>
</organism>
<keyword id="KW-0963">Cytoplasm</keyword>
<keyword id="KW-0251">Elongation factor</keyword>
<keyword id="KW-0648">Protein biosynthesis</keyword>
<gene>
    <name evidence="1" type="primary">efp</name>
    <name type="ordered locus">BruAb1_1695</name>
</gene>